<keyword id="KW-0998">Cell outer membrane</keyword>
<keyword id="KW-0413">Isomerase</keyword>
<keyword id="KW-0472">Membrane</keyword>
<keyword id="KW-1185">Reference proteome</keyword>
<keyword id="KW-0697">Rotamase</keyword>
<keyword id="KW-0732">Signal</keyword>
<accession>P26623</accession>
<sequence>MKNILSWMLMFAVALPIVGCDNGGGSQTSATEKSMVEDSALTDNQKLSRTFGHLLSRQLSRTEDFSLDLVEVIKGMQSEIDGQSAPLTDTEYEKQMAEVQKASFEAKCSENLASAEKFLKENKEKAGVIELEPNKLQYRVVKEGTGRVLSGKPTALLHYTGSFIDGKVFDSSEKNKEPILLPLTKVIPGFSQGMQGMKEGEVRVLYIHPDLAYGTAGQLPPNSLLIFEVKLIEANDDNVSVTE</sequence>
<evidence type="ECO:0000255" key="1"/>
<evidence type="ECO:0000255" key="2">
    <source>
        <dbReference type="PROSITE-ProRule" id="PRU00277"/>
    </source>
</evidence>
<evidence type="ECO:0000305" key="3"/>
<reference key="1">
    <citation type="journal article" date="1992" name="Mol. Microbiol.">
        <title>Chlamydia trachomatis Mip-like protein.</title>
        <authorList>
            <person name="Lundemose A.G."/>
            <person name="Rouch D.A."/>
            <person name="Birkelund S."/>
            <person name="Christiansen G."/>
            <person name="Pearce J.H."/>
        </authorList>
    </citation>
    <scope>NUCLEOTIDE SEQUENCE [GENOMIC DNA]</scope>
    <source>
        <strain>L2</strain>
        <strain>Serovar B</strain>
        <strain>Serovar E</strain>
    </source>
</reference>
<reference key="2">
    <citation type="journal article" date="1998" name="Science">
        <title>Genome sequence of an obligate intracellular pathogen of humans: Chlamydia trachomatis.</title>
        <authorList>
            <person name="Stephens R.S."/>
            <person name="Kalman S."/>
            <person name="Lammel C.J."/>
            <person name="Fan J."/>
            <person name="Marathe R."/>
            <person name="Aravind L."/>
            <person name="Mitchell W.P."/>
            <person name="Olinger L."/>
            <person name="Tatusov R.L."/>
            <person name="Zhao Q."/>
            <person name="Koonin E.V."/>
            <person name="Davis R.W."/>
        </authorList>
    </citation>
    <scope>NUCLEOTIDE SEQUENCE [LARGE SCALE GENOMIC DNA]</scope>
    <source>
        <strain>ATCC VR-885 / DSM 19411 / UW-3/Cx</strain>
    </source>
</reference>
<reference key="3">
    <citation type="journal article" date="1991" name="Mol. Microbiol.">
        <title>Chlamydia trachomatis contains a protein similar to the Legionella pneumophila mip gene product.</title>
        <authorList>
            <person name="Lundemose A.G."/>
            <person name="Birkelund S."/>
            <person name="Fey S.J."/>
            <person name="Mose Larsen P."/>
            <person name="Christiansen G."/>
        </authorList>
    </citation>
    <scope>NUCLEOTIDE SEQUENCE [GENOMIC DNA] OF 69-243</scope>
    <source>
        <strain>L2</strain>
    </source>
</reference>
<name>MIP_CHLTR</name>
<comment type="function">
    <text>PPIases accelerate the folding of proteins.</text>
</comment>
<comment type="catalytic activity">
    <reaction>
        <text>[protein]-peptidylproline (omega=180) = [protein]-peptidylproline (omega=0)</text>
        <dbReference type="Rhea" id="RHEA:16237"/>
        <dbReference type="Rhea" id="RHEA-COMP:10747"/>
        <dbReference type="Rhea" id="RHEA-COMP:10748"/>
        <dbReference type="ChEBI" id="CHEBI:83833"/>
        <dbReference type="ChEBI" id="CHEBI:83834"/>
        <dbReference type="EC" id="5.2.1.8"/>
    </reaction>
</comment>
<comment type="subcellular location">
    <subcellularLocation>
        <location>Cell outer membrane</location>
    </subcellularLocation>
</comment>
<comment type="similarity">
    <text evidence="3">Belongs to the FKBP-type PPIase family.</text>
</comment>
<dbReference type="EC" id="5.2.1.8"/>
<dbReference type="EMBL" id="X66126">
    <property type="protein sequence ID" value="CAA46917.1"/>
    <property type="molecule type" value="Genomic_DNA"/>
</dbReference>
<dbReference type="EMBL" id="X66127">
    <property type="protein sequence ID" value="CAA46918.1"/>
    <property type="molecule type" value="Genomic_DNA"/>
</dbReference>
<dbReference type="EMBL" id="X66128">
    <property type="protein sequence ID" value="CAA46919.1"/>
    <property type="molecule type" value="Genomic_DNA"/>
</dbReference>
<dbReference type="EMBL" id="AE001273">
    <property type="protein sequence ID" value="AAC68143.1"/>
    <property type="molecule type" value="Genomic_DNA"/>
</dbReference>
<dbReference type="PIR" id="S25255">
    <property type="entry name" value="S25255"/>
</dbReference>
<dbReference type="PIR" id="S28638">
    <property type="entry name" value="S28638"/>
</dbReference>
<dbReference type="RefSeq" id="NP_220056.1">
    <property type="nucleotide sequence ID" value="NC_000117.1"/>
</dbReference>
<dbReference type="RefSeq" id="WP_009871905.1">
    <property type="nucleotide sequence ID" value="NC_000117.1"/>
</dbReference>
<dbReference type="SMR" id="P26623"/>
<dbReference type="STRING" id="272561.CT_541"/>
<dbReference type="EnsemblBacteria" id="AAC68143">
    <property type="protein sequence ID" value="AAC68143"/>
    <property type="gene ID" value="CT_541"/>
</dbReference>
<dbReference type="GeneID" id="884327"/>
<dbReference type="KEGG" id="ctr:CT_541"/>
<dbReference type="PATRIC" id="fig|272561.5.peg.586"/>
<dbReference type="HOGENOM" id="CLU_013615_0_1_0"/>
<dbReference type="InParanoid" id="P26623"/>
<dbReference type="OrthoDB" id="9814548at2"/>
<dbReference type="Reactome" id="R-HSA-1236974">
    <property type="pathway name" value="ER-Phagosome pathway"/>
</dbReference>
<dbReference type="Reactome" id="R-HSA-166058">
    <property type="pathway name" value="MyD88:MAL(TIRAP) cascade initiated on plasma membrane"/>
</dbReference>
<dbReference type="Reactome" id="R-HSA-168188">
    <property type="pathway name" value="Toll Like Receptor TLR6:TLR2 Cascade"/>
</dbReference>
<dbReference type="Reactome" id="R-HSA-5602498">
    <property type="pathway name" value="MyD88 deficiency (TLR2/4)"/>
</dbReference>
<dbReference type="Reactome" id="R-HSA-5603041">
    <property type="pathway name" value="IRAK4 deficiency (TLR2/4)"/>
</dbReference>
<dbReference type="Proteomes" id="UP000000431">
    <property type="component" value="Chromosome"/>
</dbReference>
<dbReference type="GO" id="GO:0009279">
    <property type="term" value="C:cell outer membrane"/>
    <property type="evidence" value="ECO:0007669"/>
    <property type="project" value="UniProtKB-SubCell"/>
</dbReference>
<dbReference type="GO" id="GO:0003755">
    <property type="term" value="F:peptidyl-prolyl cis-trans isomerase activity"/>
    <property type="evidence" value="ECO:0007669"/>
    <property type="project" value="UniProtKB-KW"/>
</dbReference>
<dbReference type="GO" id="GO:0006457">
    <property type="term" value="P:protein folding"/>
    <property type="evidence" value="ECO:0007669"/>
    <property type="project" value="InterPro"/>
</dbReference>
<dbReference type="FunFam" id="3.10.50.40:FF:000060">
    <property type="entry name" value="Peptidyl-prolyl cis-trans isomerase"/>
    <property type="match status" value="1"/>
</dbReference>
<dbReference type="Gene3D" id="3.10.50.40">
    <property type="match status" value="1"/>
</dbReference>
<dbReference type="Gene3D" id="1.10.287.460">
    <property type="entry name" value="Peptidyl-prolyl cis-trans isomerase, FKBP-type, N-terminal domain"/>
    <property type="match status" value="1"/>
</dbReference>
<dbReference type="InterPro" id="IPR046357">
    <property type="entry name" value="PPIase_dom_sf"/>
</dbReference>
<dbReference type="InterPro" id="IPR001179">
    <property type="entry name" value="PPIase_FKBP_dom"/>
</dbReference>
<dbReference type="InterPro" id="IPR000774">
    <property type="entry name" value="PPIase_FKBP_N"/>
</dbReference>
<dbReference type="InterPro" id="IPR036944">
    <property type="entry name" value="PPIase_FKBP_N_sf"/>
</dbReference>
<dbReference type="PANTHER" id="PTHR43811:SF19">
    <property type="entry name" value="39 KDA FK506-BINDING NUCLEAR PROTEIN"/>
    <property type="match status" value="1"/>
</dbReference>
<dbReference type="PANTHER" id="PTHR43811">
    <property type="entry name" value="FKBP-TYPE PEPTIDYL-PROLYL CIS-TRANS ISOMERASE FKPA"/>
    <property type="match status" value="1"/>
</dbReference>
<dbReference type="Pfam" id="PF00254">
    <property type="entry name" value="FKBP_C"/>
    <property type="match status" value="1"/>
</dbReference>
<dbReference type="Pfam" id="PF01346">
    <property type="entry name" value="FKBP_N"/>
    <property type="match status" value="1"/>
</dbReference>
<dbReference type="SUPFAM" id="SSF54534">
    <property type="entry name" value="FKBP-like"/>
    <property type="match status" value="1"/>
</dbReference>
<dbReference type="PROSITE" id="PS50059">
    <property type="entry name" value="FKBP_PPIASE"/>
    <property type="match status" value="1"/>
</dbReference>
<proteinExistence type="inferred from homology"/>
<protein>
    <recommendedName>
        <fullName>Peptidyl-prolyl cis-trans isomerase Mip</fullName>
        <shortName>PPIase</shortName>
        <ecNumber>5.2.1.8</ecNumber>
    </recommendedName>
    <alternativeName>
        <fullName>27 kDa membrane protein</fullName>
    </alternativeName>
    <alternativeName>
        <fullName>Chl-Mip</fullName>
    </alternativeName>
    <alternativeName>
        <fullName>Rotamase</fullName>
    </alternativeName>
</protein>
<feature type="signal peptide" evidence="1">
    <location>
        <begin position="1"/>
        <end position="14"/>
    </location>
</feature>
<feature type="chain" id="PRO_0000025529" description="Peptidyl-prolyl cis-trans isomerase Mip">
    <location>
        <begin position="15"/>
        <end position="243"/>
    </location>
</feature>
<feature type="domain" description="PPIase FKBP-type" evidence="2">
    <location>
        <begin position="152"/>
        <end position="235"/>
    </location>
</feature>
<feature type="sequence variant" description="In strain: L2.">
    <original>S</original>
    <variation>A</variation>
    <location>
        <position position="56"/>
    </location>
</feature>
<feature type="sequence variant" description="In strain: L2.">
    <original>K</original>
    <variation>E</variation>
    <location>
        <position position="117"/>
    </location>
</feature>
<feature type="sequence conflict" description="In Ref. 3." evidence="3" ref="3">
    <original>QY</original>
    <variation>HD</variation>
    <location>
        <begin position="137"/>
        <end position="138"/>
    </location>
</feature>
<organism>
    <name type="scientific">Chlamydia trachomatis serovar D (strain ATCC VR-885 / DSM 19411 / UW-3/Cx)</name>
    <dbReference type="NCBI Taxonomy" id="272561"/>
    <lineage>
        <taxon>Bacteria</taxon>
        <taxon>Pseudomonadati</taxon>
        <taxon>Chlamydiota</taxon>
        <taxon>Chlamydiia</taxon>
        <taxon>Chlamydiales</taxon>
        <taxon>Chlamydiaceae</taxon>
        <taxon>Chlamydia/Chlamydophila group</taxon>
        <taxon>Chlamydia</taxon>
    </lineage>
</organism>
<gene>
    <name type="primary">mip</name>
    <name type="ordered locus">CT_541</name>
</gene>